<reference key="1">
    <citation type="journal article" date="2007" name="J. Bacteriol.">
        <title>The genome sequence of avian pathogenic Escherichia coli strain O1:K1:H7 shares strong similarities with human extraintestinal pathogenic E. coli genomes.</title>
        <authorList>
            <person name="Johnson T.J."/>
            <person name="Kariyawasam S."/>
            <person name="Wannemuehler Y."/>
            <person name="Mangiamele P."/>
            <person name="Johnson S.J."/>
            <person name="Doetkott C."/>
            <person name="Skyberg J.A."/>
            <person name="Lynne A.M."/>
            <person name="Johnson J.R."/>
            <person name="Nolan L.K."/>
        </authorList>
    </citation>
    <scope>NUCLEOTIDE SEQUENCE [LARGE SCALE GENOMIC DNA]</scope>
</reference>
<proteinExistence type="inferred from homology"/>
<protein>
    <recommendedName>
        <fullName evidence="1">tRNA pseudouridine synthase B</fullName>
        <ecNumber evidence="1">5.4.99.25</ecNumber>
    </recommendedName>
    <alternativeName>
        <fullName evidence="1">tRNA pseudouridine(55) synthase</fullName>
        <shortName evidence="1">Psi55 synthase</shortName>
    </alternativeName>
    <alternativeName>
        <fullName evidence="1">tRNA pseudouridylate synthase</fullName>
    </alternativeName>
    <alternativeName>
        <fullName evidence="1">tRNA-uridine isomerase</fullName>
    </alternativeName>
</protein>
<sequence length="314" mass="35087">MSRPRRRGRDINGVLLLDKPQGMSSNDALQKVKRIYNANRAGHTGALDPLATGMLPICLGEATKFSQYLLDSDKRYRVIARLGQRTDTSDADGQIVEERPVTFSAEQLAAALDTFRGDIEQIPSMYSALKYQGKKLYEYARQGIEVPREARPITVYELLFIRHEGNELELEIHCSKGTYIRTIIDDLGEKLGCGAHVIYLRRLAVSKYPVERMVTLEHLRELVEQAEQQDIPAAELLDPLLMPMDSPASDYPVVNLPLTSSVYFKNGNPVRTSGAPLEGLVRVTEGENGKFIGMGEIDDEGRVAPRRLVVEYPA</sequence>
<gene>
    <name evidence="1" type="primary">truB</name>
    <name type="ordered locus">Ecok1_31670</name>
    <name type="ORF">APECO1_3264</name>
</gene>
<evidence type="ECO:0000255" key="1">
    <source>
        <dbReference type="HAMAP-Rule" id="MF_01080"/>
    </source>
</evidence>
<accession>A1AG71</accession>
<name>TRUB_ECOK1</name>
<dbReference type="EC" id="5.4.99.25" evidence="1"/>
<dbReference type="EMBL" id="CP000468">
    <property type="protein sequence ID" value="ABJ02661.1"/>
    <property type="molecule type" value="Genomic_DNA"/>
</dbReference>
<dbReference type="RefSeq" id="WP_000089698.1">
    <property type="nucleotide sequence ID" value="NZ_CADILS010000003.1"/>
</dbReference>
<dbReference type="SMR" id="A1AG71"/>
<dbReference type="GeneID" id="93778817"/>
<dbReference type="KEGG" id="ecv:APECO1_3264"/>
<dbReference type="HOGENOM" id="CLU_032087_0_3_6"/>
<dbReference type="Proteomes" id="UP000008216">
    <property type="component" value="Chromosome"/>
</dbReference>
<dbReference type="GO" id="GO:0003723">
    <property type="term" value="F:RNA binding"/>
    <property type="evidence" value="ECO:0007669"/>
    <property type="project" value="InterPro"/>
</dbReference>
<dbReference type="GO" id="GO:0160148">
    <property type="term" value="F:tRNA pseudouridine(55) synthase activity"/>
    <property type="evidence" value="ECO:0007669"/>
    <property type="project" value="UniProtKB-EC"/>
</dbReference>
<dbReference type="GO" id="GO:1990481">
    <property type="term" value="P:mRNA pseudouridine synthesis"/>
    <property type="evidence" value="ECO:0007669"/>
    <property type="project" value="TreeGrafter"/>
</dbReference>
<dbReference type="GO" id="GO:0031119">
    <property type="term" value="P:tRNA pseudouridine synthesis"/>
    <property type="evidence" value="ECO:0007669"/>
    <property type="project" value="UniProtKB-UniRule"/>
</dbReference>
<dbReference type="CDD" id="cd02573">
    <property type="entry name" value="PseudoU_synth_EcTruB"/>
    <property type="match status" value="1"/>
</dbReference>
<dbReference type="CDD" id="cd21152">
    <property type="entry name" value="PUA_TruB_bacterial"/>
    <property type="match status" value="1"/>
</dbReference>
<dbReference type="FunFam" id="2.30.130.10:FF:000004">
    <property type="entry name" value="tRNA pseudouridine synthase B"/>
    <property type="match status" value="1"/>
</dbReference>
<dbReference type="FunFam" id="3.30.2350.10:FF:000003">
    <property type="entry name" value="tRNA pseudouridine synthase B"/>
    <property type="match status" value="1"/>
</dbReference>
<dbReference type="Gene3D" id="3.30.2350.10">
    <property type="entry name" value="Pseudouridine synthase"/>
    <property type="match status" value="1"/>
</dbReference>
<dbReference type="Gene3D" id="2.30.130.10">
    <property type="entry name" value="PUA domain"/>
    <property type="match status" value="1"/>
</dbReference>
<dbReference type="HAMAP" id="MF_01080">
    <property type="entry name" value="TruB_bact"/>
    <property type="match status" value="1"/>
</dbReference>
<dbReference type="InterPro" id="IPR020103">
    <property type="entry name" value="PsdUridine_synth_cat_dom_sf"/>
</dbReference>
<dbReference type="InterPro" id="IPR002501">
    <property type="entry name" value="PsdUridine_synth_N"/>
</dbReference>
<dbReference type="InterPro" id="IPR015947">
    <property type="entry name" value="PUA-like_sf"/>
</dbReference>
<dbReference type="InterPro" id="IPR036974">
    <property type="entry name" value="PUA_sf"/>
</dbReference>
<dbReference type="InterPro" id="IPR014780">
    <property type="entry name" value="tRNA_psdUridine_synth_TruB"/>
</dbReference>
<dbReference type="InterPro" id="IPR015240">
    <property type="entry name" value="tRNA_sdUridine_synth_fam1_C"/>
</dbReference>
<dbReference type="InterPro" id="IPR032819">
    <property type="entry name" value="TruB_C"/>
</dbReference>
<dbReference type="NCBIfam" id="TIGR00431">
    <property type="entry name" value="TruB"/>
    <property type="match status" value="1"/>
</dbReference>
<dbReference type="PANTHER" id="PTHR13767:SF2">
    <property type="entry name" value="PSEUDOURIDYLATE SYNTHASE TRUB1"/>
    <property type="match status" value="1"/>
</dbReference>
<dbReference type="PANTHER" id="PTHR13767">
    <property type="entry name" value="TRNA-PSEUDOURIDINE SYNTHASE"/>
    <property type="match status" value="1"/>
</dbReference>
<dbReference type="Pfam" id="PF09157">
    <property type="entry name" value="TruB-C_2"/>
    <property type="match status" value="1"/>
</dbReference>
<dbReference type="Pfam" id="PF16198">
    <property type="entry name" value="TruB_C_2"/>
    <property type="match status" value="1"/>
</dbReference>
<dbReference type="Pfam" id="PF01509">
    <property type="entry name" value="TruB_N"/>
    <property type="match status" value="1"/>
</dbReference>
<dbReference type="SUPFAM" id="SSF55120">
    <property type="entry name" value="Pseudouridine synthase"/>
    <property type="match status" value="1"/>
</dbReference>
<dbReference type="SUPFAM" id="SSF88697">
    <property type="entry name" value="PUA domain-like"/>
    <property type="match status" value="1"/>
</dbReference>
<keyword id="KW-0413">Isomerase</keyword>
<keyword id="KW-1185">Reference proteome</keyword>
<keyword id="KW-0819">tRNA processing</keyword>
<comment type="function">
    <text evidence="1">Responsible for synthesis of pseudouridine from uracil-55 in the psi GC loop of transfer RNAs.</text>
</comment>
<comment type="catalytic activity">
    <reaction evidence="1">
        <text>uridine(55) in tRNA = pseudouridine(55) in tRNA</text>
        <dbReference type="Rhea" id="RHEA:42532"/>
        <dbReference type="Rhea" id="RHEA-COMP:10101"/>
        <dbReference type="Rhea" id="RHEA-COMP:10102"/>
        <dbReference type="ChEBI" id="CHEBI:65314"/>
        <dbReference type="ChEBI" id="CHEBI:65315"/>
        <dbReference type="EC" id="5.4.99.25"/>
    </reaction>
</comment>
<comment type="similarity">
    <text evidence="1">Belongs to the pseudouridine synthase TruB family. Type 1 subfamily.</text>
</comment>
<organism>
    <name type="scientific">Escherichia coli O1:K1 / APEC</name>
    <dbReference type="NCBI Taxonomy" id="405955"/>
    <lineage>
        <taxon>Bacteria</taxon>
        <taxon>Pseudomonadati</taxon>
        <taxon>Pseudomonadota</taxon>
        <taxon>Gammaproteobacteria</taxon>
        <taxon>Enterobacterales</taxon>
        <taxon>Enterobacteriaceae</taxon>
        <taxon>Escherichia</taxon>
    </lineage>
</organism>
<feature type="chain" id="PRO_1000084585" description="tRNA pseudouridine synthase B">
    <location>
        <begin position="1"/>
        <end position="314"/>
    </location>
</feature>
<feature type="active site" description="Nucleophile" evidence="1">
    <location>
        <position position="48"/>
    </location>
</feature>
<feature type="binding site" evidence="1">
    <location>
        <position position="43"/>
    </location>
    <ligand>
        <name>substrate</name>
    </ligand>
</feature>
<feature type="binding site" evidence="1">
    <location>
        <position position="76"/>
    </location>
    <ligand>
        <name>substrate</name>
    </ligand>
</feature>
<feature type="binding site" evidence="1">
    <location>
        <position position="179"/>
    </location>
    <ligand>
        <name>substrate</name>
    </ligand>
</feature>
<feature type="binding site" evidence="1">
    <location>
        <position position="200"/>
    </location>
    <ligand>
        <name>substrate</name>
    </ligand>
</feature>